<evidence type="ECO:0000250" key="1"/>
<evidence type="ECO:0000250" key="2">
    <source>
        <dbReference type="UniProtKB" id="P00157"/>
    </source>
</evidence>
<evidence type="ECO:0000255" key="3">
    <source>
        <dbReference type="PROSITE-ProRule" id="PRU00967"/>
    </source>
</evidence>
<evidence type="ECO:0000255" key="4">
    <source>
        <dbReference type="PROSITE-ProRule" id="PRU00968"/>
    </source>
</evidence>
<organism>
    <name type="scientific">Notocitellus annulatus</name>
    <name type="common">Ring-tailed ground squirrel</name>
    <name type="synonym">Spermophilus annulatus</name>
    <dbReference type="NCBI Taxonomy" id="99831"/>
    <lineage>
        <taxon>Eukaryota</taxon>
        <taxon>Metazoa</taxon>
        <taxon>Chordata</taxon>
        <taxon>Craniata</taxon>
        <taxon>Vertebrata</taxon>
        <taxon>Euteleostomi</taxon>
        <taxon>Mammalia</taxon>
        <taxon>Eutheria</taxon>
        <taxon>Euarchontoglires</taxon>
        <taxon>Glires</taxon>
        <taxon>Rodentia</taxon>
        <taxon>Sciuromorpha</taxon>
        <taxon>Sciuridae</taxon>
        <taxon>Xerinae</taxon>
        <taxon>Marmotini</taxon>
        <taxon>Notocitellus</taxon>
    </lineage>
</organism>
<dbReference type="EMBL" id="AF157849">
    <property type="protein sequence ID" value="AAD50133.1"/>
    <property type="molecule type" value="Genomic_DNA"/>
</dbReference>
<dbReference type="SMR" id="Q9TF89"/>
<dbReference type="GO" id="GO:0005743">
    <property type="term" value="C:mitochondrial inner membrane"/>
    <property type="evidence" value="ECO:0007669"/>
    <property type="project" value="UniProtKB-SubCell"/>
</dbReference>
<dbReference type="GO" id="GO:0045275">
    <property type="term" value="C:respiratory chain complex III"/>
    <property type="evidence" value="ECO:0007669"/>
    <property type="project" value="InterPro"/>
</dbReference>
<dbReference type="GO" id="GO:0046872">
    <property type="term" value="F:metal ion binding"/>
    <property type="evidence" value="ECO:0007669"/>
    <property type="project" value="UniProtKB-KW"/>
</dbReference>
<dbReference type="GO" id="GO:0008121">
    <property type="term" value="F:ubiquinol-cytochrome-c reductase activity"/>
    <property type="evidence" value="ECO:0007669"/>
    <property type="project" value="InterPro"/>
</dbReference>
<dbReference type="GO" id="GO:0006122">
    <property type="term" value="P:mitochondrial electron transport, ubiquinol to cytochrome c"/>
    <property type="evidence" value="ECO:0007669"/>
    <property type="project" value="TreeGrafter"/>
</dbReference>
<dbReference type="CDD" id="cd00290">
    <property type="entry name" value="cytochrome_b_C"/>
    <property type="match status" value="1"/>
</dbReference>
<dbReference type="CDD" id="cd00284">
    <property type="entry name" value="Cytochrome_b_N"/>
    <property type="match status" value="1"/>
</dbReference>
<dbReference type="FunFam" id="1.20.810.10:FF:000002">
    <property type="entry name" value="Cytochrome b"/>
    <property type="match status" value="1"/>
</dbReference>
<dbReference type="Gene3D" id="1.20.810.10">
    <property type="entry name" value="Cytochrome Bc1 Complex, Chain C"/>
    <property type="match status" value="1"/>
</dbReference>
<dbReference type="InterPro" id="IPR005798">
    <property type="entry name" value="Cyt_b/b6_C"/>
</dbReference>
<dbReference type="InterPro" id="IPR036150">
    <property type="entry name" value="Cyt_b/b6_C_sf"/>
</dbReference>
<dbReference type="InterPro" id="IPR005797">
    <property type="entry name" value="Cyt_b/b6_N"/>
</dbReference>
<dbReference type="InterPro" id="IPR027387">
    <property type="entry name" value="Cytb/b6-like_sf"/>
</dbReference>
<dbReference type="InterPro" id="IPR030689">
    <property type="entry name" value="Cytochrome_b"/>
</dbReference>
<dbReference type="InterPro" id="IPR048260">
    <property type="entry name" value="Cytochrome_b_C_euk/bac"/>
</dbReference>
<dbReference type="InterPro" id="IPR048259">
    <property type="entry name" value="Cytochrome_b_N_euk/bac"/>
</dbReference>
<dbReference type="InterPro" id="IPR016174">
    <property type="entry name" value="Di-haem_cyt_TM"/>
</dbReference>
<dbReference type="PANTHER" id="PTHR19271">
    <property type="entry name" value="CYTOCHROME B"/>
    <property type="match status" value="1"/>
</dbReference>
<dbReference type="PANTHER" id="PTHR19271:SF16">
    <property type="entry name" value="CYTOCHROME B"/>
    <property type="match status" value="1"/>
</dbReference>
<dbReference type="Pfam" id="PF00032">
    <property type="entry name" value="Cytochrom_B_C"/>
    <property type="match status" value="1"/>
</dbReference>
<dbReference type="Pfam" id="PF00033">
    <property type="entry name" value="Cytochrome_B"/>
    <property type="match status" value="1"/>
</dbReference>
<dbReference type="PIRSF" id="PIRSF038885">
    <property type="entry name" value="COB"/>
    <property type="match status" value="1"/>
</dbReference>
<dbReference type="SUPFAM" id="SSF81648">
    <property type="entry name" value="a domain/subunit of cytochrome bc1 complex (Ubiquinol-cytochrome c reductase)"/>
    <property type="match status" value="1"/>
</dbReference>
<dbReference type="SUPFAM" id="SSF81342">
    <property type="entry name" value="Transmembrane di-heme cytochromes"/>
    <property type="match status" value="1"/>
</dbReference>
<dbReference type="PROSITE" id="PS51003">
    <property type="entry name" value="CYTB_CTER"/>
    <property type="match status" value="1"/>
</dbReference>
<dbReference type="PROSITE" id="PS51002">
    <property type="entry name" value="CYTB_NTER"/>
    <property type="match status" value="1"/>
</dbReference>
<keyword id="KW-0249">Electron transport</keyword>
<keyword id="KW-0349">Heme</keyword>
<keyword id="KW-0408">Iron</keyword>
<keyword id="KW-0472">Membrane</keyword>
<keyword id="KW-0479">Metal-binding</keyword>
<keyword id="KW-0496">Mitochondrion</keyword>
<keyword id="KW-0999">Mitochondrion inner membrane</keyword>
<keyword id="KW-0679">Respiratory chain</keyword>
<keyword id="KW-0812">Transmembrane</keyword>
<keyword id="KW-1133">Transmembrane helix</keyword>
<keyword id="KW-0813">Transport</keyword>
<keyword id="KW-0830">Ubiquinone</keyword>
<reference key="1">
    <citation type="submission" date="1999-06" db="EMBL/GenBank/DDBJ databases">
        <title>A molecular phylogeny of ground squirrels and prairie dogs.</title>
        <authorList>
            <person name="Harrison R.G."/>
            <person name="Sherman P.W."/>
            <person name="Yensen E."/>
            <person name="Hoffmann R.S."/>
            <person name="Bogdanowicz S.M."/>
        </authorList>
    </citation>
    <scope>NUCLEOTIDE SEQUENCE [GENOMIC DNA]</scope>
    <source>
        <strain>Isolate S109</strain>
    </source>
</reference>
<geneLocation type="mitochondrion"/>
<sequence length="379" mass="42963">MTNTRKTHPLMKIVNHSFIDLPAPSNISAWWNFGSLLGLCLAMQILTGLFLAMHYTSDTMTAFSSVTHICRDVNYGWLIRYMHANGASMFFICLFLHVGRGLYYGSYTYFETWNIGVILLFAVMATAFMGYVLPWGQMSFWGATVITNLLSAIPYIGTILVEWIWGGFSVDKATLTRFFAFHFILPFIVAALVMVHLLFLHETGSNNPSGLISDSDKIPFHPYFTIKDILGALLLILTLMILVLFTPDLLGDPDNYTPANPLNTPPHIKPEWYFLFAYAILRSIPNKLGGVLALIFSILILMFFPLLHMSKQRSMMFRPLSQCLFWILVADLLTLTWIGGQPVEHPFIIIGQLASILYFSIILLMIPTISLIENKLLKW</sequence>
<name>CYB_NOTAU</name>
<feature type="chain" id="PRO_0000061590" description="Cytochrome b">
    <location>
        <begin position="1"/>
        <end position="379"/>
    </location>
</feature>
<feature type="transmembrane region" description="Helical" evidence="2">
    <location>
        <begin position="33"/>
        <end position="53"/>
    </location>
</feature>
<feature type="transmembrane region" description="Helical" evidence="2">
    <location>
        <begin position="77"/>
        <end position="98"/>
    </location>
</feature>
<feature type="transmembrane region" description="Helical" evidence="2">
    <location>
        <begin position="113"/>
        <end position="133"/>
    </location>
</feature>
<feature type="transmembrane region" description="Helical" evidence="2">
    <location>
        <begin position="178"/>
        <end position="198"/>
    </location>
</feature>
<feature type="transmembrane region" description="Helical" evidence="2">
    <location>
        <begin position="226"/>
        <end position="246"/>
    </location>
</feature>
<feature type="transmembrane region" description="Helical" evidence="2">
    <location>
        <begin position="288"/>
        <end position="308"/>
    </location>
</feature>
<feature type="transmembrane region" description="Helical" evidence="2">
    <location>
        <begin position="320"/>
        <end position="340"/>
    </location>
</feature>
<feature type="transmembrane region" description="Helical" evidence="2">
    <location>
        <begin position="347"/>
        <end position="367"/>
    </location>
</feature>
<feature type="binding site" description="axial binding residue" evidence="2">
    <location>
        <position position="83"/>
    </location>
    <ligand>
        <name>heme b</name>
        <dbReference type="ChEBI" id="CHEBI:60344"/>
        <label>b562</label>
    </ligand>
    <ligandPart>
        <name>Fe</name>
        <dbReference type="ChEBI" id="CHEBI:18248"/>
    </ligandPart>
</feature>
<feature type="binding site" description="axial binding residue" evidence="2">
    <location>
        <position position="97"/>
    </location>
    <ligand>
        <name>heme b</name>
        <dbReference type="ChEBI" id="CHEBI:60344"/>
        <label>b566</label>
    </ligand>
    <ligandPart>
        <name>Fe</name>
        <dbReference type="ChEBI" id="CHEBI:18248"/>
    </ligandPart>
</feature>
<feature type="binding site" description="axial binding residue" evidence="2">
    <location>
        <position position="182"/>
    </location>
    <ligand>
        <name>heme b</name>
        <dbReference type="ChEBI" id="CHEBI:60344"/>
        <label>b562</label>
    </ligand>
    <ligandPart>
        <name>Fe</name>
        <dbReference type="ChEBI" id="CHEBI:18248"/>
    </ligandPart>
</feature>
<feature type="binding site" description="axial binding residue" evidence="2">
    <location>
        <position position="196"/>
    </location>
    <ligand>
        <name>heme b</name>
        <dbReference type="ChEBI" id="CHEBI:60344"/>
        <label>b566</label>
    </ligand>
    <ligandPart>
        <name>Fe</name>
        <dbReference type="ChEBI" id="CHEBI:18248"/>
    </ligandPart>
</feature>
<feature type="binding site" evidence="2">
    <location>
        <position position="201"/>
    </location>
    <ligand>
        <name>a ubiquinone</name>
        <dbReference type="ChEBI" id="CHEBI:16389"/>
    </ligand>
</feature>
<protein>
    <recommendedName>
        <fullName>Cytochrome b</fullName>
    </recommendedName>
    <alternativeName>
        <fullName>Complex III subunit 3</fullName>
    </alternativeName>
    <alternativeName>
        <fullName>Complex III subunit III</fullName>
    </alternativeName>
    <alternativeName>
        <fullName>Cytochrome b-c1 complex subunit 3</fullName>
    </alternativeName>
    <alternativeName>
        <fullName>Ubiquinol-cytochrome-c reductase complex cytochrome b subunit</fullName>
    </alternativeName>
</protein>
<accession>Q9TF89</accession>
<gene>
    <name type="primary">MT-CYB</name>
    <name type="synonym">COB</name>
    <name type="synonym">CYTB</name>
    <name type="synonym">MTCYB</name>
</gene>
<proteinExistence type="inferred from homology"/>
<comment type="function">
    <text evidence="2">Component of the ubiquinol-cytochrome c reductase complex (complex III or cytochrome b-c1 complex) that is part of the mitochondrial respiratory chain. The b-c1 complex mediates electron transfer from ubiquinol to cytochrome c. Contributes to the generation of a proton gradient across the mitochondrial membrane that is then used for ATP synthesis.</text>
</comment>
<comment type="cofactor">
    <cofactor evidence="2">
        <name>heme b</name>
        <dbReference type="ChEBI" id="CHEBI:60344"/>
    </cofactor>
    <text evidence="2">Binds 2 heme b groups non-covalently.</text>
</comment>
<comment type="subunit">
    <text evidence="2">The cytochrome bc1 complex contains 11 subunits: 3 respiratory subunits (MT-CYB, CYC1 and UQCRFS1), 2 core proteins (UQCRC1 and UQCRC2) and 6 low-molecular weight proteins (UQCRH/QCR6, UQCRB/QCR7, UQCRQ/QCR8, UQCR10/QCR9, UQCR11/QCR10 and a cleavage product of UQCRFS1). This cytochrome bc1 complex then forms a dimer.</text>
</comment>
<comment type="subcellular location">
    <subcellularLocation>
        <location evidence="2">Mitochondrion inner membrane</location>
        <topology evidence="2">Multi-pass membrane protein</topology>
    </subcellularLocation>
</comment>
<comment type="miscellaneous">
    <text evidence="1">Heme 1 (or BL or b562) is low-potential and absorbs at about 562 nm, and heme 2 (or BH or b566) is high-potential and absorbs at about 566 nm.</text>
</comment>
<comment type="similarity">
    <text evidence="3 4">Belongs to the cytochrome b family.</text>
</comment>
<comment type="caution">
    <text evidence="2">The full-length protein contains only eight transmembrane helices, not nine as predicted by bioinformatics tools.</text>
</comment>